<protein>
    <recommendedName>
        <fullName evidence="1">Bifunctional protein FolD</fullName>
    </recommendedName>
    <domain>
        <recommendedName>
            <fullName evidence="1">Methylenetetrahydrofolate dehydrogenase</fullName>
            <ecNumber evidence="1">1.5.1.5</ecNumber>
        </recommendedName>
    </domain>
    <domain>
        <recommendedName>
            <fullName evidence="1">Methenyltetrahydrofolate cyclohydrolase</fullName>
            <ecNumber evidence="1">3.5.4.9</ecNumber>
        </recommendedName>
    </domain>
</protein>
<accession>B7GT00</accession>
<accession>E8MLG7</accession>
<sequence length="291" mass="31003">MSTKIDGKQIAAEIKTNLAERVNRLKAQGIQPGLGTLLVGEDPGSMKYVAGKHADCQEVGITSVKKELPADASFDDIAATVRELNEDPACTGFIVQLPLPKGINENAIIDMIDPAKDADGMHPYNLGELVLHVRGDISTPLPCTPRGVLELLDAYDIDLNGKEVCVLGRGITIGRTIGLMLTRNAVNATVTLCHTGTRDVADHMRRADVIVAAMGSAGFVTPDKIKDGAVLVDVGISRVYDEEAGRYRIKGDVDKACYDKASAYTPNPGGVGPMTRAMLLANVVEMAERHA</sequence>
<name>FOLD_BIFLS</name>
<dbReference type="EC" id="1.5.1.5" evidence="1"/>
<dbReference type="EC" id="3.5.4.9" evidence="1"/>
<dbReference type="EMBL" id="CP001095">
    <property type="protein sequence ID" value="ACJ52830.1"/>
    <property type="molecule type" value="Genomic_DNA"/>
</dbReference>
<dbReference type="EMBL" id="AP010889">
    <property type="protein sequence ID" value="BAJ69394.1"/>
    <property type="molecule type" value="Genomic_DNA"/>
</dbReference>
<dbReference type="RefSeq" id="WP_012578054.1">
    <property type="nucleotide sequence ID" value="NC_011593.1"/>
</dbReference>
<dbReference type="SMR" id="B7GT00"/>
<dbReference type="KEGG" id="bln:Blon_1755"/>
<dbReference type="KEGG" id="blon:BLIJ_1814"/>
<dbReference type="PATRIC" id="fig|391904.8.peg.1820"/>
<dbReference type="HOGENOM" id="CLU_034045_3_0_11"/>
<dbReference type="UniPathway" id="UPA00193"/>
<dbReference type="Proteomes" id="UP000001360">
    <property type="component" value="Chromosome"/>
</dbReference>
<dbReference type="GO" id="GO:0005829">
    <property type="term" value="C:cytosol"/>
    <property type="evidence" value="ECO:0007669"/>
    <property type="project" value="TreeGrafter"/>
</dbReference>
<dbReference type="GO" id="GO:0004477">
    <property type="term" value="F:methenyltetrahydrofolate cyclohydrolase activity"/>
    <property type="evidence" value="ECO:0007669"/>
    <property type="project" value="UniProtKB-UniRule"/>
</dbReference>
<dbReference type="GO" id="GO:0004488">
    <property type="term" value="F:methylenetetrahydrofolate dehydrogenase (NADP+) activity"/>
    <property type="evidence" value="ECO:0007669"/>
    <property type="project" value="UniProtKB-UniRule"/>
</dbReference>
<dbReference type="GO" id="GO:0000105">
    <property type="term" value="P:L-histidine biosynthetic process"/>
    <property type="evidence" value="ECO:0007669"/>
    <property type="project" value="UniProtKB-KW"/>
</dbReference>
<dbReference type="GO" id="GO:0009086">
    <property type="term" value="P:methionine biosynthetic process"/>
    <property type="evidence" value="ECO:0007669"/>
    <property type="project" value="UniProtKB-KW"/>
</dbReference>
<dbReference type="GO" id="GO:0006164">
    <property type="term" value="P:purine nucleotide biosynthetic process"/>
    <property type="evidence" value="ECO:0007669"/>
    <property type="project" value="UniProtKB-KW"/>
</dbReference>
<dbReference type="GO" id="GO:0035999">
    <property type="term" value="P:tetrahydrofolate interconversion"/>
    <property type="evidence" value="ECO:0007669"/>
    <property type="project" value="UniProtKB-UniRule"/>
</dbReference>
<dbReference type="CDD" id="cd01080">
    <property type="entry name" value="NAD_bind_m-THF_DH_Cyclohyd"/>
    <property type="match status" value="1"/>
</dbReference>
<dbReference type="FunFam" id="3.40.50.10860:FF:000005">
    <property type="entry name" value="C-1-tetrahydrofolate synthase, cytoplasmic, putative"/>
    <property type="match status" value="1"/>
</dbReference>
<dbReference type="Gene3D" id="3.40.50.10860">
    <property type="entry name" value="Leucine Dehydrogenase, chain A, domain 1"/>
    <property type="match status" value="1"/>
</dbReference>
<dbReference type="Gene3D" id="3.40.50.720">
    <property type="entry name" value="NAD(P)-binding Rossmann-like Domain"/>
    <property type="match status" value="1"/>
</dbReference>
<dbReference type="HAMAP" id="MF_01576">
    <property type="entry name" value="THF_DHG_CYH"/>
    <property type="match status" value="1"/>
</dbReference>
<dbReference type="InterPro" id="IPR046346">
    <property type="entry name" value="Aminoacid_DH-like_N_sf"/>
</dbReference>
<dbReference type="InterPro" id="IPR036291">
    <property type="entry name" value="NAD(P)-bd_dom_sf"/>
</dbReference>
<dbReference type="InterPro" id="IPR000672">
    <property type="entry name" value="THF_DH/CycHdrlase"/>
</dbReference>
<dbReference type="InterPro" id="IPR020630">
    <property type="entry name" value="THF_DH/CycHdrlase_cat_dom"/>
</dbReference>
<dbReference type="InterPro" id="IPR020631">
    <property type="entry name" value="THF_DH/CycHdrlase_NAD-bd_dom"/>
</dbReference>
<dbReference type="NCBIfam" id="NF010789">
    <property type="entry name" value="PRK14193.1"/>
    <property type="match status" value="1"/>
</dbReference>
<dbReference type="PANTHER" id="PTHR48099:SF5">
    <property type="entry name" value="C-1-TETRAHYDROFOLATE SYNTHASE, CYTOPLASMIC"/>
    <property type="match status" value="1"/>
</dbReference>
<dbReference type="PANTHER" id="PTHR48099">
    <property type="entry name" value="C-1-TETRAHYDROFOLATE SYNTHASE, CYTOPLASMIC-RELATED"/>
    <property type="match status" value="1"/>
</dbReference>
<dbReference type="Pfam" id="PF00763">
    <property type="entry name" value="THF_DHG_CYH"/>
    <property type="match status" value="1"/>
</dbReference>
<dbReference type="Pfam" id="PF02882">
    <property type="entry name" value="THF_DHG_CYH_C"/>
    <property type="match status" value="1"/>
</dbReference>
<dbReference type="PRINTS" id="PR00085">
    <property type="entry name" value="THFDHDRGNASE"/>
</dbReference>
<dbReference type="SUPFAM" id="SSF53223">
    <property type="entry name" value="Aminoacid dehydrogenase-like, N-terminal domain"/>
    <property type="match status" value="1"/>
</dbReference>
<dbReference type="SUPFAM" id="SSF51735">
    <property type="entry name" value="NAD(P)-binding Rossmann-fold domains"/>
    <property type="match status" value="1"/>
</dbReference>
<gene>
    <name evidence="1" type="primary">folD</name>
    <name type="ordered locus">Blon_1755</name>
    <name type="ordered locus">BLIJ_1814</name>
</gene>
<reference key="1">
    <citation type="journal article" date="2008" name="Proc. Natl. Acad. Sci. U.S.A.">
        <title>The genome sequence of Bifidobacterium longum subsp. infantis reveals adaptations for milk utilization within the infant microbiome.</title>
        <authorList>
            <person name="Sela D.A."/>
            <person name="Chapman J."/>
            <person name="Adeuya A."/>
            <person name="Kim J.H."/>
            <person name="Chen F."/>
            <person name="Whitehead T.R."/>
            <person name="Lapidus A."/>
            <person name="Rokhsar D.S."/>
            <person name="Lebrilla C.B."/>
            <person name="German J.B."/>
            <person name="Price N.P."/>
            <person name="Richardson P.M."/>
            <person name="Mills D.A."/>
        </authorList>
    </citation>
    <scope>NUCLEOTIDE SEQUENCE [LARGE SCALE GENOMIC DNA]</scope>
    <source>
        <strain>ATCC 15697 / DSM 20088 / JCM 1222 / NCTC 11817 / S12</strain>
    </source>
</reference>
<reference key="2">
    <citation type="journal article" date="2011" name="Nature">
        <title>Bifidobacteria can protect from enteropathogenic infection through production of acetate.</title>
        <authorList>
            <person name="Fukuda S."/>
            <person name="Toh H."/>
            <person name="Hase K."/>
            <person name="Oshima K."/>
            <person name="Nakanishi Y."/>
            <person name="Yoshimura K."/>
            <person name="Tobe T."/>
            <person name="Clarke J.M."/>
            <person name="Topping D.L."/>
            <person name="Suzuki T."/>
            <person name="Taylor T.D."/>
            <person name="Itoh K."/>
            <person name="Kikuchi J."/>
            <person name="Morita H."/>
            <person name="Hattori M."/>
            <person name="Ohno H."/>
        </authorList>
    </citation>
    <scope>NUCLEOTIDE SEQUENCE [LARGE SCALE GENOMIC DNA]</scope>
    <source>
        <strain>ATCC 15697 / DSM 20088 / JCM 1222 / NCTC 11817 / S12</strain>
    </source>
</reference>
<comment type="function">
    <text evidence="1">Catalyzes the oxidation of 5,10-methylenetetrahydrofolate to 5,10-methenyltetrahydrofolate and then the hydrolysis of 5,10-methenyltetrahydrofolate to 10-formyltetrahydrofolate.</text>
</comment>
<comment type="catalytic activity">
    <reaction evidence="1">
        <text>(6R)-5,10-methylene-5,6,7,8-tetrahydrofolate + NADP(+) = (6R)-5,10-methenyltetrahydrofolate + NADPH</text>
        <dbReference type="Rhea" id="RHEA:22812"/>
        <dbReference type="ChEBI" id="CHEBI:15636"/>
        <dbReference type="ChEBI" id="CHEBI:57455"/>
        <dbReference type="ChEBI" id="CHEBI:57783"/>
        <dbReference type="ChEBI" id="CHEBI:58349"/>
        <dbReference type="EC" id="1.5.1.5"/>
    </reaction>
</comment>
<comment type="catalytic activity">
    <reaction evidence="1">
        <text>(6R)-5,10-methenyltetrahydrofolate + H2O = (6R)-10-formyltetrahydrofolate + H(+)</text>
        <dbReference type="Rhea" id="RHEA:23700"/>
        <dbReference type="ChEBI" id="CHEBI:15377"/>
        <dbReference type="ChEBI" id="CHEBI:15378"/>
        <dbReference type="ChEBI" id="CHEBI:57455"/>
        <dbReference type="ChEBI" id="CHEBI:195366"/>
        <dbReference type="EC" id="3.5.4.9"/>
    </reaction>
</comment>
<comment type="pathway">
    <text evidence="1">One-carbon metabolism; tetrahydrofolate interconversion.</text>
</comment>
<comment type="subunit">
    <text evidence="1">Homodimer.</text>
</comment>
<comment type="similarity">
    <text evidence="1">Belongs to the tetrahydrofolate dehydrogenase/cyclohydrolase family.</text>
</comment>
<proteinExistence type="inferred from homology"/>
<organism>
    <name type="scientific">Bifidobacterium longum subsp. infantis (strain ATCC 15697 / DSM 20088 / JCM 1222 / NCTC 11817 / S12)</name>
    <dbReference type="NCBI Taxonomy" id="391904"/>
    <lineage>
        <taxon>Bacteria</taxon>
        <taxon>Bacillati</taxon>
        <taxon>Actinomycetota</taxon>
        <taxon>Actinomycetes</taxon>
        <taxon>Bifidobacteriales</taxon>
        <taxon>Bifidobacteriaceae</taxon>
        <taxon>Bifidobacterium</taxon>
    </lineage>
</organism>
<feature type="chain" id="PRO_1000185597" description="Bifunctional protein FolD">
    <location>
        <begin position="1"/>
        <end position="291"/>
    </location>
</feature>
<feature type="binding site" evidence="1">
    <location>
        <begin position="168"/>
        <end position="170"/>
    </location>
    <ligand>
        <name>NADP(+)</name>
        <dbReference type="ChEBI" id="CHEBI:58349"/>
    </ligand>
</feature>
<feature type="binding site" evidence="1">
    <location>
        <position position="195"/>
    </location>
    <ligand>
        <name>NADP(+)</name>
        <dbReference type="ChEBI" id="CHEBI:58349"/>
    </ligand>
</feature>
<feature type="binding site" evidence="1">
    <location>
        <position position="236"/>
    </location>
    <ligand>
        <name>NADP(+)</name>
        <dbReference type="ChEBI" id="CHEBI:58349"/>
    </ligand>
</feature>
<evidence type="ECO:0000255" key="1">
    <source>
        <dbReference type="HAMAP-Rule" id="MF_01576"/>
    </source>
</evidence>
<keyword id="KW-0028">Amino-acid biosynthesis</keyword>
<keyword id="KW-0368">Histidine biosynthesis</keyword>
<keyword id="KW-0378">Hydrolase</keyword>
<keyword id="KW-0486">Methionine biosynthesis</keyword>
<keyword id="KW-0511">Multifunctional enzyme</keyword>
<keyword id="KW-0521">NADP</keyword>
<keyword id="KW-0554">One-carbon metabolism</keyword>
<keyword id="KW-0560">Oxidoreductase</keyword>
<keyword id="KW-0658">Purine biosynthesis</keyword>